<feature type="initiator methionine" description="Removed" evidence="1">
    <location>
        <position position="1"/>
    </location>
</feature>
<feature type="chain" id="PRO_0000108257" description="Cytochrome c, somatic">
    <location>
        <begin position="2"/>
        <end position="105"/>
    </location>
</feature>
<feature type="binding site" description="covalent" evidence="2">
    <location>
        <position position="15"/>
    </location>
    <ligand>
        <name>heme c</name>
        <dbReference type="ChEBI" id="CHEBI:61717"/>
    </ligand>
</feature>
<feature type="binding site" description="covalent" evidence="2">
    <location>
        <position position="18"/>
    </location>
    <ligand>
        <name>heme c</name>
        <dbReference type="ChEBI" id="CHEBI:61717"/>
    </ligand>
</feature>
<feature type="binding site" description="axial binding residue" evidence="2">
    <location>
        <position position="19"/>
    </location>
    <ligand>
        <name>heme c</name>
        <dbReference type="ChEBI" id="CHEBI:61717"/>
    </ligand>
    <ligandPart>
        <name>Fe</name>
        <dbReference type="ChEBI" id="CHEBI:18248"/>
    </ligandPart>
</feature>
<feature type="binding site" description="axial binding residue" evidence="2">
    <location>
        <position position="81"/>
    </location>
    <ligand>
        <name>heme c</name>
        <dbReference type="ChEBI" id="CHEBI:61717"/>
    </ligand>
    <ligandPart>
        <name>Fe</name>
        <dbReference type="ChEBI" id="CHEBI:18248"/>
    </ligandPart>
</feature>
<feature type="modified residue" description="N-acetylglycine" evidence="1">
    <location>
        <position position="2"/>
    </location>
</feature>
<evidence type="ECO:0000250" key="1"/>
<evidence type="ECO:0000255" key="2">
    <source>
        <dbReference type="PROSITE-ProRule" id="PRU00433"/>
    </source>
</evidence>
<evidence type="ECO:0000305" key="3"/>
<organism>
    <name type="scientific">Xenopus tropicalis</name>
    <name type="common">Western clawed frog</name>
    <name type="synonym">Silurana tropicalis</name>
    <dbReference type="NCBI Taxonomy" id="8364"/>
    <lineage>
        <taxon>Eukaryota</taxon>
        <taxon>Metazoa</taxon>
        <taxon>Chordata</taxon>
        <taxon>Craniata</taxon>
        <taxon>Vertebrata</taxon>
        <taxon>Euteleostomi</taxon>
        <taxon>Amphibia</taxon>
        <taxon>Batrachia</taxon>
        <taxon>Anura</taxon>
        <taxon>Pipoidea</taxon>
        <taxon>Pipidae</taxon>
        <taxon>Xenopodinae</taxon>
        <taxon>Xenopus</taxon>
        <taxon>Silurana</taxon>
    </lineage>
</organism>
<proteinExistence type="inferred from homology"/>
<protein>
    <recommendedName>
        <fullName>Cytochrome c, somatic</fullName>
    </recommendedName>
</protein>
<name>CYC1_XENTR</name>
<reference key="1">
    <citation type="submission" date="2006-10" db="EMBL/GenBank/DDBJ databases">
        <authorList>
            <consortium name="Sanger Xenopus tropicalis EST/cDNA project"/>
        </authorList>
    </citation>
    <scope>NUCLEOTIDE SEQUENCE [LARGE SCALE MRNA]</scope>
    <source>
        <tissue>Tadpole</tissue>
    </source>
</reference>
<reference key="2">
    <citation type="submission" date="2004-09" db="EMBL/GenBank/DDBJ databases">
        <authorList>
            <consortium name="NIH - Xenopus Gene Collection (XGC) project"/>
        </authorList>
    </citation>
    <scope>NUCLEOTIDE SEQUENCE [LARGE SCALE MRNA]</scope>
</reference>
<gene>
    <name type="primary">cycs</name>
    <name type="ORF">TTpA002h20.1</name>
</gene>
<keyword id="KW-0007">Acetylation</keyword>
<keyword id="KW-0249">Electron transport</keyword>
<keyword id="KW-0349">Heme</keyword>
<keyword id="KW-0408">Iron</keyword>
<keyword id="KW-0479">Metal-binding</keyword>
<keyword id="KW-0496">Mitochondrion</keyword>
<keyword id="KW-1185">Reference proteome</keyword>
<keyword id="KW-0679">Respiratory chain</keyword>
<keyword id="KW-0813">Transport</keyword>
<comment type="function">
    <text evidence="1">Electron carrier protein. The oxidized form of the cytochrome c heme group can accept an electron from the heme group of the cytochrome c1 subunit of cytochrome reductase. Cytochrome c then transfers this electron to the cytochrome oxidase complex, the final protein carrier in the mitochondrial electron-transport chain (By similarity).</text>
</comment>
<comment type="subcellular location">
    <subcellularLocation>
        <location evidence="1">Mitochondrion intermembrane space</location>
    </subcellularLocation>
    <text evidence="1">Loosely associated with the inner membrane.</text>
</comment>
<comment type="PTM">
    <text evidence="1">Binds 1 heme c group covalently per subunit.</text>
</comment>
<comment type="similarity">
    <text evidence="3">Belongs to the cytochrome c family.</text>
</comment>
<comment type="sequence caution" evidence="3">
    <conflict type="erroneous initiation">
        <sequence resource="EMBL-CDS" id="CAJ83237"/>
    </conflict>
</comment>
<comment type="online information" name="Protein Spotlight">
    <link uri="https://www.proteinspotlight.org/back_issues/076"/>
    <text>Life shuttle - Issue 76 of November 2006</text>
</comment>
<dbReference type="EMBL" id="CR760771">
    <property type="protein sequence ID" value="CAJ83237.1"/>
    <property type="status" value="ALT_INIT"/>
    <property type="molecule type" value="mRNA"/>
</dbReference>
<dbReference type="EMBL" id="BC082495">
    <property type="protein sequence ID" value="AAH82495.1"/>
    <property type="molecule type" value="mRNA"/>
</dbReference>
<dbReference type="RefSeq" id="NP_001008176.1">
    <property type="nucleotide sequence ID" value="NM_001008175.1"/>
</dbReference>
<dbReference type="RefSeq" id="XP_012825804.1">
    <property type="nucleotide sequence ID" value="XM_012970350.2"/>
</dbReference>
<dbReference type="SMR" id="Q640U4"/>
<dbReference type="FunCoup" id="Q640U4">
    <property type="interactions" value="2320"/>
</dbReference>
<dbReference type="STRING" id="8364.ENSXETP00000051640"/>
<dbReference type="PaxDb" id="8364-ENSXETP00000018532"/>
<dbReference type="DNASU" id="493538"/>
<dbReference type="GeneID" id="493538"/>
<dbReference type="KEGG" id="xtr:493538"/>
<dbReference type="AGR" id="Xenbase:XB-GENE-5931974"/>
<dbReference type="CTD" id="13067"/>
<dbReference type="Xenbase" id="XB-GENE-5931974">
    <property type="gene designation" value="cyct"/>
</dbReference>
<dbReference type="eggNOG" id="KOG3453">
    <property type="taxonomic scope" value="Eukaryota"/>
</dbReference>
<dbReference type="HOGENOM" id="CLU_060944_3_0_1"/>
<dbReference type="InParanoid" id="Q640U4"/>
<dbReference type="OrthoDB" id="9854531at2759"/>
<dbReference type="PhylomeDB" id="Q640U4"/>
<dbReference type="Reactome" id="R-XTR-111457">
    <property type="pathway name" value="Release of apoptotic factors from the mitochondria"/>
</dbReference>
<dbReference type="Reactome" id="R-XTR-111458">
    <property type="pathway name" value="Formation of apoptosome"/>
</dbReference>
<dbReference type="Reactome" id="R-XTR-111459">
    <property type="pathway name" value="Activation of caspases through apoptosome-mediated cleavage"/>
</dbReference>
<dbReference type="Reactome" id="R-XTR-2151201">
    <property type="pathway name" value="Transcriptional activation of mitochondrial biogenesis"/>
</dbReference>
<dbReference type="Reactome" id="R-XTR-3299685">
    <property type="pathway name" value="Detoxification of Reactive Oxygen Species"/>
</dbReference>
<dbReference type="Reactome" id="R-XTR-5620971">
    <property type="pathway name" value="Pyroptosis"/>
</dbReference>
<dbReference type="Reactome" id="R-XTR-5628897">
    <property type="pathway name" value="TP53 Regulates Metabolic Genes"/>
</dbReference>
<dbReference type="Reactome" id="R-XTR-611105">
    <property type="pathway name" value="Respiratory electron transport"/>
</dbReference>
<dbReference type="Reactome" id="R-XTR-9627069">
    <property type="pathway name" value="Regulation of the apoptosome activity"/>
</dbReference>
<dbReference type="Reactome" id="R-XTR-9707564">
    <property type="pathway name" value="Cytoprotection by HMOX1"/>
</dbReference>
<dbReference type="Proteomes" id="UP000008143">
    <property type="component" value="Chromosome 9"/>
</dbReference>
<dbReference type="Bgee" id="ENSXETG00000008472">
    <property type="expression patterns" value="Expressed in skeletal muscle tissue and 14 other cell types or tissues"/>
</dbReference>
<dbReference type="ExpressionAtlas" id="Q640U4">
    <property type="expression patterns" value="baseline and differential"/>
</dbReference>
<dbReference type="GO" id="GO:0005758">
    <property type="term" value="C:mitochondrial intermembrane space"/>
    <property type="evidence" value="ECO:0007669"/>
    <property type="project" value="UniProtKB-SubCell"/>
</dbReference>
<dbReference type="GO" id="GO:0009055">
    <property type="term" value="F:electron transfer activity"/>
    <property type="evidence" value="ECO:0007669"/>
    <property type="project" value="InterPro"/>
</dbReference>
<dbReference type="GO" id="GO:0020037">
    <property type="term" value="F:heme binding"/>
    <property type="evidence" value="ECO:0007669"/>
    <property type="project" value="InterPro"/>
</dbReference>
<dbReference type="GO" id="GO:0046872">
    <property type="term" value="F:metal ion binding"/>
    <property type="evidence" value="ECO:0007669"/>
    <property type="project" value="UniProtKB-KW"/>
</dbReference>
<dbReference type="FunFam" id="1.10.760.10:FF:000008">
    <property type="entry name" value="Cytochrome c"/>
    <property type="match status" value="1"/>
</dbReference>
<dbReference type="Gene3D" id="1.10.760.10">
    <property type="entry name" value="Cytochrome c-like domain"/>
    <property type="match status" value="1"/>
</dbReference>
<dbReference type="InterPro" id="IPR009056">
    <property type="entry name" value="Cyt_c-like_dom"/>
</dbReference>
<dbReference type="InterPro" id="IPR036909">
    <property type="entry name" value="Cyt_c-like_dom_sf"/>
</dbReference>
<dbReference type="InterPro" id="IPR002327">
    <property type="entry name" value="Cyt_c_1A/1B"/>
</dbReference>
<dbReference type="PANTHER" id="PTHR11961">
    <property type="entry name" value="CYTOCHROME C"/>
    <property type="match status" value="1"/>
</dbReference>
<dbReference type="Pfam" id="PF00034">
    <property type="entry name" value="Cytochrom_C"/>
    <property type="match status" value="1"/>
</dbReference>
<dbReference type="PRINTS" id="PR00604">
    <property type="entry name" value="CYTCHRMECIAB"/>
</dbReference>
<dbReference type="SUPFAM" id="SSF46626">
    <property type="entry name" value="Cytochrome c"/>
    <property type="match status" value="1"/>
</dbReference>
<dbReference type="PROSITE" id="PS51007">
    <property type="entry name" value="CYTC"/>
    <property type="match status" value="1"/>
</dbReference>
<sequence>MGDVEKGKKIFVQKCAQCHTVEKTGKHKTGPNLWGLFGRKTGQAPGFSYTDANKSKGIVWGEDTLFEYLENPKKYIPGTKMIFAGIKKKNERADLIAYLKKSTSE</sequence>
<accession>Q640U4</accession>
<accession>Q28HR6</accession>